<accession>Q72DL8</accession>
<organism>
    <name type="scientific">Nitratidesulfovibrio vulgaris (strain ATCC 29579 / DSM 644 / CCUG 34227 / NCIMB 8303 / VKM B-1760 / Hildenborough)</name>
    <name type="common">Desulfovibrio vulgaris</name>
    <dbReference type="NCBI Taxonomy" id="882"/>
    <lineage>
        <taxon>Bacteria</taxon>
        <taxon>Pseudomonadati</taxon>
        <taxon>Thermodesulfobacteriota</taxon>
        <taxon>Desulfovibrionia</taxon>
        <taxon>Desulfovibrionales</taxon>
        <taxon>Desulfovibrionaceae</taxon>
        <taxon>Nitratidesulfovibrio</taxon>
    </lineage>
</organism>
<gene>
    <name evidence="1" type="primary">truA</name>
    <name type="ordered locus">DVU_0911</name>
</gene>
<proteinExistence type="evidence at protein level"/>
<feature type="chain" id="PRO_0000057374" description="tRNA pseudouridine synthase A">
    <location>
        <begin position="1"/>
        <end position="297"/>
    </location>
</feature>
<feature type="active site" description="Nucleophile" evidence="1">
    <location>
        <position position="57"/>
    </location>
</feature>
<feature type="binding site" evidence="1">
    <location>
        <position position="115"/>
    </location>
    <ligand>
        <name>substrate</name>
    </ligand>
</feature>
<protein>
    <recommendedName>
        <fullName evidence="1">tRNA pseudouridine synthase A</fullName>
        <ecNumber evidence="1">5.4.99.12</ecNumber>
    </recommendedName>
    <alternativeName>
        <fullName evidence="1">tRNA pseudouridine(38-40) synthase</fullName>
    </alternativeName>
    <alternativeName>
        <fullName evidence="1">tRNA pseudouridylate synthase I</fullName>
    </alternativeName>
    <alternativeName>
        <fullName evidence="1">tRNA-uridine isomerase I</fullName>
    </alternativeName>
</protein>
<keyword id="KW-0413">Isomerase</keyword>
<keyword id="KW-1185">Reference proteome</keyword>
<keyword id="KW-0819">tRNA processing</keyword>
<name>TRUA_NITV2</name>
<comment type="function">
    <text evidence="1">Formation of pseudouridine at positions 38, 39 and 40 in the anticodon stem and loop of transfer RNAs.</text>
</comment>
<comment type="catalytic activity">
    <reaction evidence="1">
        <text>uridine(38/39/40) in tRNA = pseudouridine(38/39/40) in tRNA</text>
        <dbReference type="Rhea" id="RHEA:22376"/>
        <dbReference type="Rhea" id="RHEA-COMP:10085"/>
        <dbReference type="Rhea" id="RHEA-COMP:10087"/>
        <dbReference type="ChEBI" id="CHEBI:65314"/>
        <dbReference type="ChEBI" id="CHEBI:65315"/>
        <dbReference type="EC" id="5.4.99.12"/>
    </reaction>
</comment>
<comment type="subunit">
    <text evidence="1">Homodimer.</text>
</comment>
<comment type="interaction">
    <interactant intactId="EBI-10070235">
        <id>Q72DL8</id>
    </interactant>
    <interactant intactId="EBI-10065635">
        <id>Q72FQ1</id>
        <label>carB</label>
    </interactant>
    <organismsDiffer>false</organismsDiffer>
    <experiments>2</experiments>
</comment>
<comment type="similarity">
    <text evidence="1">Belongs to the tRNA pseudouridine synthase TruA family.</text>
</comment>
<reference key="1">
    <citation type="journal article" date="2004" name="Nat. Biotechnol.">
        <title>The genome sequence of the anaerobic, sulfate-reducing bacterium Desulfovibrio vulgaris Hildenborough.</title>
        <authorList>
            <person name="Heidelberg J.F."/>
            <person name="Seshadri R."/>
            <person name="Haveman S.A."/>
            <person name="Hemme C.L."/>
            <person name="Paulsen I.T."/>
            <person name="Kolonay J.F."/>
            <person name="Eisen J.A."/>
            <person name="Ward N.L."/>
            <person name="Methe B.A."/>
            <person name="Brinkac L.M."/>
            <person name="Daugherty S.C."/>
            <person name="DeBoy R.T."/>
            <person name="Dodson R.J."/>
            <person name="Durkin A.S."/>
            <person name="Madupu R."/>
            <person name="Nelson W.C."/>
            <person name="Sullivan S.A."/>
            <person name="Fouts D.E."/>
            <person name="Haft D.H."/>
            <person name="Selengut J."/>
            <person name="Peterson J.D."/>
            <person name="Davidsen T.M."/>
            <person name="Zafar N."/>
            <person name="Zhou L."/>
            <person name="Radune D."/>
            <person name="Dimitrov G."/>
            <person name="Hance M."/>
            <person name="Tran K."/>
            <person name="Khouri H.M."/>
            <person name="Gill J."/>
            <person name="Utterback T.R."/>
            <person name="Feldblyum T.V."/>
            <person name="Wall J.D."/>
            <person name="Voordouw G."/>
            <person name="Fraser C.M."/>
        </authorList>
    </citation>
    <scope>NUCLEOTIDE SEQUENCE [LARGE SCALE GENOMIC DNA]</scope>
    <source>
        <strain>ATCC 29579 / DSM 644 / CCUG 34227 / NCIMB 8303 / VKM B-1760 / Hildenborough</strain>
    </source>
</reference>
<dbReference type="EC" id="5.4.99.12" evidence="1"/>
<dbReference type="EMBL" id="AE017285">
    <property type="protein sequence ID" value="AAS95391.1"/>
    <property type="molecule type" value="Genomic_DNA"/>
</dbReference>
<dbReference type="RefSeq" id="WP_010938210.1">
    <property type="nucleotide sequence ID" value="NC_002937.3"/>
</dbReference>
<dbReference type="RefSeq" id="YP_010132.1">
    <property type="nucleotide sequence ID" value="NC_002937.3"/>
</dbReference>
<dbReference type="SMR" id="Q72DL8"/>
<dbReference type="IntAct" id="Q72DL8">
    <property type="interactions" value="1"/>
</dbReference>
<dbReference type="STRING" id="882.DVU_0911"/>
<dbReference type="PaxDb" id="882-DVU_0911"/>
<dbReference type="EnsemblBacteria" id="AAS95391">
    <property type="protein sequence ID" value="AAS95391"/>
    <property type="gene ID" value="DVU_0911"/>
</dbReference>
<dbReference type="KEGG" id="dvu:DVU_0911"/>
<dbReference type="PATRIC" id="fig|882.5.peg.855"/>
<dbReference type="eggNOG" id="COG0101">
    <property type="taxonomic scope" value="Bacteria"/>
</dbReference>
<dbReference type="HOGENOM" id="CLU_014673_0_1_7"/>
<dbReference type="OrthoDB" id="9811823at2"/>
<dbReference type="PhylomeDB" id="Q72DL8"/>
<dbReference type="Proteomes" id="UP000002194">
    <property type="component" value="Chromosome"/>
</dbReference>
<dbReference type="GO" id="GO:0003723">
    <property type="term" value="F:RNA binding"/>
    <property type="evidence" value="ECO:0007669"/>
    <property type="project" value="InterPro"/>
</dbReference>
<dbReference type="GO" id="GO:0160147">
    <property type="term" value="F:tRNA pseudouridine(38-40) synthase activity"/>
    <property type="evidence" value="ECO:0007669"/>
    <property type="project" value="UniProtKB-EC"/>
</dbReference>
<dbReference type="GO" id="GO:0031119">
    <property type="term" value="P:tRNA pseudouridine synthesis"/>
    <property type="evidence" value="ECO:0007669"/>
    <property type="project" value="UniProtKB-UniRule"/>
</dbReference>
<dbReference type="CDD" id="cd02570">
    <property type="entry name" value="PseudoU_synth_EcTruA"/>
    <property type="match status" value="1"/>
</dbReference>
<dbReference type="FunFam" id="3.30.70.580:FF:000001">
    <property type="entry name" value="tRNA pseudouridine synthase A"/>
    <property type="match status" value="1"/>
</dbReference>
<dbReference type="Gene3D" id="3.30.70.660">
    <property type="entry name" value="Pseudouridine synthase I, catalytic domain, C-terminal subdomain"/>
    <property type="match status" value="1"/>
</dbReference>
<dbReference type="Gene3D" id="3.30.70.580">
    <property type="entry name" value="Pseudouridine synthase I, catalytic domain, N-terminal subdomain"/>
    <property type="match status" value="1"/>
</dbReference>
<dbReference type="HAMAP" id="MF_00171">
    <property type="entry name" value="TruA"/>
    <property type="match status" value="1"/>
</dbReference>
<dbReference type="InterPro" id="IPR020103">
    <property type="entry name" value="PsdUridine_synth_cat_dom_sf"/>
</dbReference>
<dbReference type="InterPro" id="IPR001406">
    <property type="entry name" value="PsdUridine_synth_TruA"/>
</dbReference>
<dbReference type="InterPro" id="IPR020097">
    <property type="entry name" value="PsdUridine_synth_TruA_a/b_dom"/>
</dbReference>
<dbReference type="InterPro" id="IPR020095">
    <property type="entry name" value="PsdUridine_synth_TruA_C"/>
</dbReference>
<dbReference type="InterPro" id="IPR020094">
    <property type="entry name" value="TruA/RsuA/RluB/E/F_N"/>
</dbReference>
<dbReference type="PANTHER" id="PTHR11142">
    <property type="entry name" value="PSEUDOURIDYLATE SYNTHASE"/>
    <property type="match status" value="1"/>
</dbReference>
<dbReference type="PANTHER" id="PTHR11142:SF0">
    <property type="entry name" value="TRNA PSEUDOURIDINE SYNTHASE-LIKE 1"/>
    <property type="match status" value="1"/>
</dbReference>
<dbReference type="Pfam" id="PF01416">
    <property type="entry name" value="PseudoU_synth_1"/>
    <property type="match status" value="2"/>
</dbReference>
<dbReference type="PIRSF" id="PIRSF001430">
    <property type="entry name" value="tRNA_psdUrid_synth"/>
    <property type="match status" value="1"/>
</dbReference>
<dbReference type="SUPFAM" id="SSF55120">
    <property type="entry name" value="Pseudouridine synthase"/>
    <property type="match status" value="1"/>
</dbReference>
<sequence>MARLRLTIAYKGTDLHGWQVQEHATRPRPRTVQGVLEPIVSRMAGEQVRLHAAGRTDAGVHADGQVAHVDIPDHKLGVDWQKAINAQLPDDICILDVRRAADDFHARFDALGKRYTYRLWLTRRFIPPKLHGQVWATGPLDVYAMDRAARHLAGTHDFAAFQNQGTDVTSTVRTVHAIRRCPSGTLPAGALLTCSEPYTSWRCTGTHPDQPPATAGHPLAGIGLELVWSFEGDGFLKQMVRNMMGLLVAVGRGALAADDVPGIMATLDRSRAPATAPACGLTLSEVYYPPCDYPYAR</sequence>
<evidence type="ECO:0000255" key="1">
    <source>
        <dbReference type="HAMAP-Rule" id="MF_00171"/>
    </source>
</evidence>